<comment type="function">
    <text evidence="1">Involved in the gluconeogenesis. Catalyzes the conversion of oxaloacetate (OAA) to phosphoenolpyruvate (PEP) through direct phosphoryl transfer between the nucleoside triphosphate and OAA.</text>
</comment>
<comment type="catalytic activity">
    <reaction evidence="1">
        <text>oxaloacetate + ATP = phosphoenolpyruvate + ADP + CO2</text>
        <dbReference type="Rhea" id="RHEA:18617"/>
        <dbReference type="ChEBI" id="CHEBI:16452"/>
        <dbReference type="ChEBI" id="CHEBI:16526"/>
        <dbReference type="ChEBI" id="CHEBI:30616"/>
        <dbReference type="ChEBI" id="CHEBI:58702"/>
        <dbReference type="ChEBI" id="CHEBI:456216"/>
        <dbReference type="EC" id="4.1.1.49"/>
    </reaction>
</comment>
<comment type="cofactor">
    <cofactor evidence="1">
        <name>Mn(2+)</name>
        <dbReference type="ChEBI" id="CHEBI:29035"/>
    </cofactor>
    <text evidence="1">Binds 1 Mn(2+) ion per subunit.</text>
</comment>
<comment type="pathway">
    <text evidence="1">Carbohydrate biosynthesis; gluconeogenesis.</text>
</comment>
<comment type="subunit">
    <text evidence="1">Monomer.</text>
</comment>
<comment type="subcellular location">
    <subcellularLocation>
        <location evidence="1">Cytoplasm</location>
    </subcellularLocation>
</comment>
<comment type="similarity">
    <text evidence="1">Belongs to the phosphoenolpyruvate carboxykinase (ATP) family.</text>
</comment>
<protein>
    <recommendedName>
        <fullName evidence="1">Phosphoenolpyruvate carboxykinase (ATP)</fullName>
        <shortName evidence="1">PCK</shortName>
        <shortName evidence="1">PEP carboxykinase</shortName>
        <shortName evidence="1">PEPCK</shortName>
        <ecNumber evidence="1">4.1.1.49</ecNumber>
    </recommendedName>
</protein>
<sequence length="513" mass="56130">MADVSNRVHLNPTTAQLVEIALLRGEGQLTANGALVAKTGERTGRSPNDRFIVKEANTEADIEWGKVNRPFDAGKFDALWGRVEAYLADKELFTSELEVGADDEHYIPVRVTTEFAWHQLFARNLFIAPETFNRGNKDTWQIINAPGFVCEPQRDGTNSEAAVILNFAERKVLLAGLKYAGEMKKSMFSVQNFLLPAKGVLPMHCSANVGHDGDTTLFFGLSGTGKTTLSADPKRFLIGDDEHGWAPGGVFNIEGGCYAKCIDLSQKNEPVIWDAIRFGTVLENVVLDEQRVPDYKDTSLTENSRAAYPLEHIAQRKEDNRGAEPHAVVFLTCDVSGVLPPVSVLSKEQAAYHFLSGYTAKVGSTEMGSTSAIQSTFSTCFGAPFFPRPAGVYAELLMKRIESFGSQVYLVNTGWTGGPHGVGKRFDIPTTRAIVDAIVSGELKDVETVYIDKLNLNVPVSVSGVDTALLNPVNTWADKAEYDKYAQQLAQEFSDNFAKYKVSEAIKNAGPNV</sequence>
<gene>
    <name evidence="1" type="primary">pckA</name>
    <name type="ordered locus">Sfri_0101</name>
</gene>
<feature type="chain" id="PRO_1000026353" description="Phosphoenolpyruvate carboxykinase (ATP)">
    <location>
        <begin position="1"/>
        <end position="513"/>
    </location>
</feature>
<feature type="binding site" evidence="1">
    <location>
        <position position="45"/>
    </location>
    <ligand>
        <name>substrate</name>
    </ligand>
</feature>
<feature type="binding site" evidence="1">
    <location>
        <position position="179"/>
    </location>
    <ligand>
        <name>substrate</name>
    </ligand>
</feature>
<feature type="binding site" evidence="1">
    <location>
        <position position="185"/>
    </location>
    <ligand>
        <name>ATP</name>
        <dbReference type="ChEBI" id="CHEBI:30616"/>
    </ligand>
</feature>
<feature type="binding site" evidence="1">
    <location>
        <position position="185"/>
    </location>
    <ligand>
        <name>Mn(2+)</name>
        <dbReference type="ChEBI" id="CHEBI:29035"/>
    </ligand>
</feature>
<feature type="binding site" evidence="1">
    <location>
        <position position="185"/>
    </location>
    <ligand>
        <name>substrate</name>
    </ligand>
</feature>
<feature type="binding site" evidence="1">
    <location>
        <position position="204"/>
    </location>
    <ligand>
        <name>ATP</name>
        <dbReference type="ChEBI" id="CHEBI:30616"/>
    </ligand>
</feature>
<feature type="binding site" evidence="1">
    <location>
        <position position="204"/>
    </location>
    <ligand>
        <name>Mn(2+)</name>
        <dbReference type="ChEBI" id="CHEBI:29035"/>
    </ligand>
</feature>
<feature type="binding site" evidence="1">
    <location>
        <begin position="220"/>
        <end position="228"/>
    </location>
    <ligand>
        <name>ATP</name>
        <dbReference type="ChEBI" id="CHEBI:30616"/>
    </ligand>
</feature>
<feature type="binding site" evidence="1">
    <location>
        <position position="241"/>
    </location>
    <ligand>
        <name>Mn(2+)</name>
        <dbReference type="ChEBI" id="CHEBI:29035"/>
    </ligand>
</feature>
<feature type="binding site" evidence="1">
    <location>
        <position position="269"/>
    </location>
    <ligand>
        <name>ATP</name>
        <dbReference type="ChEBI" id="CHEBI:30616"/>
    </ligand>
</feature>
<feature type="binding site" evidence="1">
    <location>
        <position position="305"/>
    </location>
    <ligand>
        <name>ATP</name>
        <dbReference type="ChEBI" id="CHEBI:30616"/>
    </ligand>
</feature>
<feature type="binding site" evidence="1">
    <location>
        <position position="305"/>
    </location>
    <ligand>
        <name>substrate</name>
    </ligand>
</feature>
<feature type="binding site" evidence="1">
    <location>
        <position position="431"/>
    </location>
    <ligand>
        <name>ATP</name>
        <dbReference type="ChEBI" id="CHEBI:30616"/>
    </ligand>
</feature>
<name>PCKA_SHEFN</name>
<proteinExistence type="inferred from homology"/>
<keyword id="KW-0067">ATP-binding</keyword>
<keyword id="KW-0963">Cytoplasm</keyword>
<keyword id="KW-0210">Decarboxylase</keyword>
<keyword id="KW-0312">Gluconeogenesis</keyword>
<keyword id="KW-0456">Lyase</keyword>
<keyword id="KW-0464">Manganese</keyword>
<keyword id="KW-0479">Metal-binding</keyword>
<keyword id="KW-0547">Nucleotide-binding</keyword>
<keyword id="KW-1185">Reference proteome</keyword>
<reference key="1">
    <citation type="submission" date="2006-08" db="EMBL/GenBank/DDBJ databases">
        <title>Complete sequence of Shewanella frigidimarina NCIMB 400.</title>
        <authorList>
            <consortium name="US DOE Joint Genome Institute"/>
            <person name="Copeland A."/>
            <person name="Lucas S."/>
            <person name="Lapidus A."/>
            <person name="Barry K."/>
            <person name="Detter J.C."/>
            <person name="Glavina del Rio T."/>
            <person name="Hammon N."/>
            <person name="Israni S."/>
            <person name="Dalin E."/>
            <person name="Tice H."/>
            <person name="Pitluck S."/>
            <person name="Fredrickson J.K."/>
            <person name="Kolker E."/>
            <person name="McCuel L.A."/>
            <person name="DiChristina T."/>
            <person name="Nealson K.H."/>
            <person name="Newman D."/>
            <person name="Tiedje J.M."/>
            <person name="Zhou J."/>
            <person name="Romine M.F."/>
            <person name="Culley D.E."/>
            <person name="Serres M."/>
            <person name="Chertkov O."/>
            <person name="Brettin T."/>
            <person name="Bruce D."/>
            <person name="Han C."/>
            <person name="Tapia R."/>
            <person name="Gilna P."/>
            <person name="Schmutz J."/>
            <person name="Larimer F."/>
            <person name="Land M."/>
            <person name="Hauser L."/>
            <person name="Kyrpides N."/>
            <person name="Mikhailova N."/>
            <person name="Richardson P."/>
        </authorList>
    </citation>
    <scope>NUCLEOTIDE SEQUENCE [LARGE SCALE GENOMIC DNA]</scope>
    <source>
        <strain>NCIMB 400</strain>
    </source>
</reference>
<accession>Q089V1</accession>
<dbReference type="EC" id="4.1.1.49" evidence="1"/>
<dbReference type="EMBL" id="CP000447">
    <property type="protein sequence ID" value="ABI69964.1"/>
    <property type="molecule type" value="Genomic_DNA"/>
</dbReference>
<dbReference type="SMR" id="Q089V1"/>
<dbReference type="STRING" id="318167.Sfri_0101"/>
<dbReference type="KEGG" id="sfr:Sfri_0101"/>
<dbReference type="eggNOG" id="COG1866">
    <property type="taxonomic scope" value="Bacteria"/>
</dbReference>
<dbReference type="HOGENOM" id="CLU_018247_0_1_6"/>
<dbReference type="UniPathway" id="UPA00138"/>
<dbReference type="Proteomes" id="UP000000684">
    <property type="component" value="Chromosome"/>
</dbReference>
<dbReference type="GO" id="GO:0005829">
    <property type="term" value="C:cytosol"/>
    <property type="evidence" value="ECO:0007669"/>
    <property type="project" value="TreeGrafter"/>
</dbReference>
<dbReference type="GO" id="GO:0005524">
    <property type="term" value="F:ATP binding"/>
    <property type="evidence" value="ECO:0007669"/>
    <property type="project" value="UniProtKB-UniRule"/>
</dbReference>
<dbReference type="GO" id="GO:0046872">
    <property type="term" value="F:metal ion binding"/>
    <property type="evidence" value="ECO:0007669"/>
    <property type="project" value="UniProtKB-KW"/>
</dbReference>
<dbReference type="GO" id="GO:0004612">
    <property type="term" value="F:phosphoenolpyruvate carboxykinase (ATP) activity"/>
    <property type="evidence" value="ECO:0007669"/>
    <property type="project" value="UniProtKB-UniRule"/>
</dbReference>
<dbReference type="GO" id="GO:0006094">
    <property type="term" value="P:gluconeogenesis"/>
    <property type="evidence" value="ECO:0007669"/>
    <property type="project" value="UniProtKB-UniRule"/>
</dbReference>
<dbReference type="CDD" id="cd00484">
    <property type="entry name" value="PEPCK_ATP"/>
    <property type="match status" value="1"/>
</dbReference>
<dbReference type="FunFam" id="2.170.8.10:FF:000001">
    <property type="entry name" value="Phosphoenolpyruvate carboxykinase (ATP)"/>
    <property type="match status" value="1"/>
</dbReference>
<dbReference type="Gene3D" id="3.90.228.20">
    <property type="match status" value="1"/>
</dbReference>
<dbReference type="Gene3D" id="3.40.449.10">
    <property type="entry name" value="Phosphoenolpyruvate Carboxykinase, domain 1"/>
    <property type="match status" value="1"/>
</dbReference>
<dbReference type="Gene3D" id="2.170.8.10">
    <property type="entry name" value="Phosphoenolpyruvate Carboxykinase, domain 2"/>
    <property type="match status" value="1"/>
</dbReference>
<dbReference type="HAMAP" id="MF_00453">
    <property type="entry name" value="PEPCK_ATP"/>
    <property type="match status" value="1"/>
</dbReference>
<dbReference type="InterPro" id="IPR001272">
    <property type="entry name" value="PEP_carboxykinase_ATP"/>
</dbReference>
<dbReference type="InterPro" id="IPR013035">
    <property type="entry name" value="PEP_carboxykinase_C"/>
</dbReference>
<dbReference type="InterPro" id="IPR008210">
    <property type="entry name" value="PEP_carboxykinase_N"/>
</dbReference>
<dbReference type="InterPro" id="IPR015994">
    <property type="entry name" value="PEPCK_ATP_CS"/>
</dbReference>
<dbReference type="NCBIfam" id="TIGR00224">
    <property type="entry name" value="pckA"/>
    <property type="match status" value="1"/>
</dbReference>
<dbReference type="NCBIfam" id="NF006820">
    <property type="entry name" value="PRK09344.1-2"/>
    <property type="match status" value="1"/>
</dbReference>
<dbReference type="NCBIfam" id="NF006821">
    <property type="entry name" value="PRK09344.1-3"/>
    <property type="match status" value="1"/>
</dbReference>
<dbReference type="NCBIfam" id="NF006823">
    <property type="entry name" value="PRK09344.1-5"/>
    <property type="match status" value="1"/>
</dbReference>
<dbReference type="PANTHER" id="PTHR30031:SF0">
    <property type="entry name" value="PHOSPHOENOLPYRUVATE CARBOXYKINASE (ATP)"/>
    <property type="match status" value="1"/>
</dbReference>
<dbReference type="PANTHER" id="PTHR30031">
    <property type="entry name" value="PHOSPHOENOLPYRUVATE CARBOXYKINASE ATP"/>
    <property type="match status" value="1"/>
</dbReference>
<dbReference type="Pfam" id="PF01293">
    <property type="entry name" value="PEPCK_ATP"/>
    <property type="match status" value="1"/>
</dbReference>
<dbReference type="PIRSF" id="PIRSF006294">
    <property type="entry name" value="PEP_crbxkin"/>
    <property type="match status" value="1"/>
</dbReference>
<dbReference type="SUPFAM" id="SSF68923">
    <property type="entry name" value="PEP carboxykinase N-terminal domain"/>
    <property type="match status" value="1"/>
</dbReference>
<dbReference type="SUPFAM" id="SSF53795">
    <property type="entry name" value="PEP carboxykinase-like"/>
    <property type="match status" value="1"/>
</dbReference>
<dbReference type="PROSITE" id="PS00532">
    <property type="entry name" value="PEPCK_ATP"/>
    <property type="match status" value="1"/>
</dbReference>
<evidence type="ECO:0000255" key="1">
    <source>
        <dbReference type="HAMAP-Rule" id="MF_00453"/>
    </source>
</evidence>
<organism>
    <name type="scientific">Shewanella frigidimarina (strain NCIMB 400)</name>
    <dbReference type="NCBI Taxonomy" id="318167"/>
    <lineage>
        <taxon>Bacteria</taxon>
        <taxon>Pseudomonadati</taxon>
        <taxon>Pseudomonadota</taxon>
        <taxon>Gammaproteobacteria</taxon>
        <taxon>Alteromonadales</taxon>
        <taxon>Shewanellaceae</taxon>
        <taxon>Shewanella</taxon>
    </lineage>
</organism>